<dbReference type="EC" id="3.5.4.19" evidence="2"/>
<dbReference type="EC" id="3.6.1.31" evidence="2"/>
<dbReference type="EMBL" id="AB006083">
    <property type="protein sequence ID" value="BAA32529.1"/>
    <property type="molecule type" value="Genomic_DNA"/>
</dbReference>
<dbReference type="EMBL" id="AB006082">
    <property type="protein sequence ID" value="BAA32528.1"/>
    <property type="molecule type" value="mRNA"/>
</dbReference>
<dbReference type="EMBL" id="AC079041">
    <property type="protein sequence ID" value="AAG50725.1"/>
    <property type="molecule type" value="Genomic_DNA"/>
</dbReference>
<dbReference type="EMBL" id="CP002684">
    <property type="protein sequence ID" value="AEE31408.1"/>
    <property type="molecule type" value="Genomic_DNA"/>
</dbReference>
<dbReference type="EMBL" id="AY046000">
    <property type="protein sequence ID" value="AAK76674.1"/>
    <property type="molecule type" value="mRNA"/>
</dbReference>
<dbReference type="EMBL" id="AY079376">
    <property type="protein sequence ID" value="AAL85107.1"/>
    <property type="molecule type" value="mRNA"/>
</dbReference>
<dbReference type="EMBL" id="AY086514">
    <property type="protein sequence ID" value="AAM63514.1"/>
    <property type="molecule type" value="mRNA"/>
</dbReference>
<dbReference type="PIR" id="T51812">
    <property type="entry name" value="T51812"/>
</dbReference>
<dbReference type="RefSeq" id="NP_174469.1">
    <property type="nucleotide sequence ID" value="NM_102923.4"/>
</dbReference>
<dbReference type="SMR" id="O82768"/>
<dbReference type="FunCoup" id="O82768">
    <property type="interactions" value="703"/>
</dbReference>
<dbReference type="STRING" id="3702.O82768"/>
<dbReference type="SwissPalm" id="O82768"/>
<dbReference type="PaxDb" id="3702-AT1G31860.1"/>
<dbReference type="EnsemblPlants" id="AT1G31860.1">
    <property type="protein sequence ID" value="AT1G31860.1"/>
    <property type="gene ID" value="AT1G31860"/>
</dbReference>
<dbReference type="GeneID" id="840076"/>
<dbReference type="Gramene" id="AT1G31860.1">
    <property type="protein sequence ID" value="AT1G31860.1"/>
    <property type="gene ID" value="AT1G31860"/>
</dbReference>
<dbReference type="KEGG" id="ath:AT1G31860"/>
<dbReference type="Araport" id="AT1G31860"/>
<dbReference type="TAIR" id="AT1G31860">
    <property type="gene designation" value="AT-IE"/>
</dbReference>
<dbReference type="eggNOG" id="KOG4311">
    <property type="taxonomic scope" value="Eukaryota"/>
</dbReference>
<dbReference type="HOGENOM" id="CLU_048577_3_2_1"/>
<dbReference type="InParanoid" id="O82768"/>
<dbReference type="OrthoDB" id="1703565at2759"/>
<dbReference type="PhylomeDB" id="O82768"/>
<dbReference type="BioCyc" id="ARA:AT1G31860-MONOMER"/>
<dbReference type="BioCyc" id="MetaCyc:AT1G31860-MONOMER"/>
<dbReference type="BRENDA" id="3.5.4.19">
    <property type="organism ID" value="399"/>
</dbReference>
<dbReference type="UniPathway" id="UPA00031">
    <property type="reaction ID" value="UER00007"/>
</dbReference>
<dbReference type="UniPathway" id="UPA00031">
    <property type="reaction ID" value="UER00008"/>
</dbReference>
<dbReference type="PRO" id="PR:O82768"/>
<dbReference type="Proteomes" id="UP000006548">
    <property type="component" value="Chromosome 1"/>
</dbReference>
<dbReference type="ExpressionAtlas" id="O82768">
    <property type="expression patterns" value="baseline and differential"/>
</dbReference>
<dbReference type="GO" id="GO:0009507">
    <property type="term" value="C:chloroplast"/>
    <property type="evidence" value="ECO:0007005"/>
    <property type="project" value="TAIR"/>
</dbReference>
<dbReference type="GO" id="GO:0009570">
    <property type="term" value="C:chloroplast stroma"/>
    <property type="evidence" value="ECO:0007005"/>
    <property type="project" value="TAIR"/>
</dbReference>
<dbReference type="GO" id="GO:0005829">
    <property type="term" value="C:cytosol"/>
    <property type="evidence" value="ECO:0007005"/>
    <property type="project" value="TAIR"/>
</dbReference>
<dbReference type="GO" id="GO:0005524">
    <property type="term" value="F:ATP binding"/>
    <property type="evidence" value="ECO:0007669"/>
    <property type="project" value="UniProtKB-KW"/>
</dbReference>
<dbReference type="GO" id="GO:0004635">
    <property type="term" value="F:phosphoribosyl-AMP cyclohydrolase activity"/>
    <property type="evidence" value="ECO:0000314"/>
    <property type="project" value="TAIR"/>
</dbReference>
<dbReference type="GO" id="GO:0004636">
    <property type="term" value="F:phosphoribosyl-ATP diphosphatase activity"/>
    <property type="evidence" value="ECO:0000314"/>
    <property type="project" value="TAIR"/>
</dbReference>
<dbReference type="GO" id="GO:0000105">
    <property type="term" value="P:L-histidine biosynthetic process"/>
    <property type="evidence" value="ECO:0000304"/>
    <property type="project" value="TAIR"/>
</dbReference>
<dbReference type="CDD" id="cd11534">
    <property type="entry name" value="NTP-PPase_HisIE_like"/>
    <property type="match status" value="1"/>
</dbReference>
<dbReference type="FunFam" id="3.10.20.810:FF:000001">
    <property type="entry name" value="Histidine biosynthesis bifunctional protein HisIE"/>
    <property type="match status" value="1"/>
</dbReference>
<dbReference type="Gene3D" id="1.10.287.1080">
    <property type="entry name" value="MazG-like"/>
    <property type="match status" value="1"/>
</dbReference>
<dbReference type="Gene3D" id="3.10.20.810">
    <property type="entry name" value="Phosphoribosyl-AMP cyclohydrolase"/>
    <property type="match status" value="1"/>
</dbReference>
<dbReference type="HAMAP" id="MF_01019">
    <property type="entry name" value="HisIE"/>
    <property type="match status" value="1"/>
</dbReference>
<dbReference type="InterPro" id="IPR023019">
    <property type="entry name" value="His_synth_HisIE"/>
</dbReference>
<dbReference type="InterPro" id="IPR008179">
    <property type="entry name" value="HisE"/>
</dbReference>
<dbReference type="InterPro" id="IPR021130">
    <property type="entry name" value="PRib-ATP_PPHydrolase-like"/>
</dbReference>
<dbReference type="InterPro" id="IPR002496">
    <property type="entry name" value="PRib_AMP_CycHydrolase_dom"/>
</dbReference>
<dbReference type="InterPro" id="IPR038019">
    <property type="entry name" value="PRib_AMP_CycHydrolase_sf"/>
</dbReference>
<dbReference type="NCBIfam" id="TIGR03188">
    <property type="entry name" value="histidine_hisI"/>
    <property type="match status" value="1"/>
</dbReference>
<dbReference type="PANTHER" id="PTHR42945">
    <property type="entry name" value="HISTIDINE BIOSYNTHESIS BIFUNCTIONAL PROTEIN"/>
    <property type="match status" value="1"/>
</dbReference>
<dbReference type="PANTHER" id="PTHR42945:SF1">
    <property type="entry name" value="HISTIDINE BIOSYNTHESIS BIFUNCTIONAL PROTEIN HIS7"/>
    <property type="match status" value="1"/>
</dbReference>
<dbReference type="Pfam" id="PF01502">
    <property type="entry name" value="PRA-CH"/>
    <property type="match status" value="1"/>
</dbReference>
<dbReference type="Pfam" id="PF01503">
    <property type="entry name" value="PRA-PH"/>
    <property type="match status" value="1"/>
</dbReference>
<dbReference type="SUPFAM" id="SSF101386">
    <property type="entry name" value="all-alpha NTP pyrophosphatases"/>
    <property type="match status" value="1"/>
</dbReference>
<dbReference type="SUPFAM" id="SSF141734">
    <property type="entry name" value="HisI-like"/>
    <property type="match status" value="1"/>
</dbReference>
<gene>
    <name type="primary">HISN2</name>
    <name type="ordered locus">At1g31860</name>
    <name type="ORF">F5M6.13</name>
</gene>
<sequence length="281" mass="31668">MAVSYNALAQSLARSSCFIPKPYSFRDTKLRSRSNVVFACNDNKNIALQAKVDNLLDRIKWDDKGLAVAIAQNVDTGAVLMQGFVNREALSTTISSRKATFFSRSRSTLWTKGETSNNFINILDVYVDCDRDSIIYLGTPDGPTCHTGEETCYYTSVFDQLNNDEASGNKLALTTLYSLESIISKRKEESTVPQEGKPSWTRRLLTDDALLCSKIREEADELCRTLEDNEEVSRTPSEMADVLYHAMVLLSKRGVKMEDVLEVLRKRFSQSGIEEKQNRTK</sequence>
<organism>
    <name type="scientific">Arabidopsis thaliana</name>
    <name type="common">Mouse-ear cress</name>
    <dbReference type="NCBI Taxonomy" id="3702"/>
    <lineage>
        <taxon>Eukaryota</taxon>
        <taxon>Viridiplantae</taxon>
        <taxon>Streptophyta</taxon>
        <taxon>Embryophyta</taxon>
        <taxon>Tracheophyta</taxon>
        <taxon>Spermatophyta</taxon>
        <taxon>Magnoliopsida</taxon>
        <taxon>eudicotyledons</taxon>
        <taxon>Gunneridae</taxon>
        <taxon>Pentapetalae</taxon>
        <taxon>rosids</taxon>
        <taxon>malvids</taxon>
        <taxon>Brassicales</taxon>
        <taxon>Brassicaceae</taxon>
        <taxon>Camelineae</taxon>
        <taxon>Arabidopsis</taxon>
    </lineage>
</organism>
<comment type="catalytic activity">
    <reaction evidence="2">
        <text>1-(5-phospho-beta-D-ribosyl)-ATP + H2O = 1-(5-phospho-beta-D-ribosyl)-5'-AMP + diphosphate + H(+)</text>
        <dbReference type="Rhea" id="RHEA:22828"/>
        <dbReference type="ChEBI" id="CHEBI:15377"/>
        <dbReference type="ChEBI" id="CHEBI:15378"/>
        <dbReference type="ChEBI" id="CHEBI:33019"/>
        <dbReference type="ChEBI" id="CHEBI:59457"/>
        <dbReference type="ChEBI" id="CHEBI:73183"/>
        <dbReference type="EC" id="3.6.1.31"/>
    </reaction>
</comment>
<comment type="catalytic activity">
    <reaction evidence="2">
        <text>1-(5-phospho-beta-D-ribosyl)-5'-AMP + H2O = 1-(5-phospho-beta-D-ribosyl)-5-[(5-phospho-beta-D-ribosylamino)methylideneamino]imidazole-4-carboxamide</text>
        <dbReference type="Rhea" id="RHEA:20049"/>
        <dbReference type="ChEBI" id="CHEBI:15377"/>
        <dbReference type="ChEBI" id="CHEBI:58435"/>
        <dbReference type="ChEBI" id="CHEBI:59457"/>
        <dbReference type="EC" id="3.5.4.19"/>
    </reaction>
</comment>
<comment type="pathway">
    <text evidence="2">Amino-acid biosynthesis; L-histidine biosynthesis; L-histidine from 5-phospho-alpha-D-ribose 1-diphosphate: step 2/9.</text>
</comment>
<comment type="pathway">
    <text evidence="2">Amino-acid biosynthesis; L-histidine biosynthesis; L-histidine from 5-phospho-alpha-D-ribose 1-diphosphate: step 3/9.</text>
</comment>
<comment type="subcellular location">
    <subcellularLocation>
        <location evidence="3">Plastid</location>
        <location evidence="3">Chloroplast</location>
    </subcellularLocation>
</comment>
<comment type="tissue specificity">
    <text evidence="2">Ubiquitously expressed throughout development.</text>
</comment>
<comment type="similarity">
    <text evidence="3">In the N-terminal section; belongs to the PRA-CH family.</text>
</comment>
<comment type="similarity">
    <text evidence="3">In the C-terminal section; belongs to the PRA-PH family.</text>
</comment>
<protein>
    <recommendedName>
        <fullName>Histidine biosynthesis bifunctional protein hisIE, chloroplastic</fullName>
    </recommendedName>
    <alternativeName>
        <fullName>Protein HISTIDINE BIOSYNTHESIS 2</fullName>
    </alternativeName>
    <domain>
        <recommendedName>
            <fullName>Phosphoribosyl-AMP cyclohydrolase</fullName>
            <shortName>PRA-CH</shortName>
            <ecNumber evidence="2">3.5.4.19</ecNumber>
        </recommendedName>
    </domain>
    <domain>
        <recommendedName>
            <fullName>Phosphoribosyl-ATP pyrophosphatase</fullName>
            <shortName>PRA-PH</shortName>
            <ecNumber evidence="2">3.6.1.31</ecNumber>
        </recommendedName>
    </domain>
</protein>
<name>HIS2_ARATH</name>
<reference key="1">
    <citation type="journal article" date="1998" name="Plant Physiol.">
        <title>Isolation and characterization of a histidine biosynthetic gene in Arabidopsis encoding a polypeptide with two separate domains for phosphoribosyl-ATP pyrophosphohydrolase and phosphoribosyl-AMP cyclohydrolase.</title>
        <authorList>
            <person name="Fujimori K."/>
            <person name="Ohta D."/>
        </authorList>
    </citation>
    <scope>NUCLEOTIDE SEQUENCE [GENOMIC DNA / MRNA]</scope>
    <scope>FUNCTION</scope>
    <scope>CATALYTIC ACTIVITY</scope>
    <scope>PATHWAY</scope>
    <scope>TISSUE SPECIFICITY</scope>
    <source>
        <strain>cv. Columbia</strain>
    </source>
</reference>
<reference key="2">
    <citation type="journal article" date="2000" name="Nature">
        <title>Sequence and analysis of chromosome 1 of the plant Arabidopsis thaliana.</title>
        <authorList>
            <person name="Theologis A."/>
            <person name="Ecker J.R."/>
            <person name="Palm C.J."/>
            <person name="Federspiel N.A."/>
            <person name="Kaul S."/>
            <person name="White O."/>
            <person name="Alonso J."/>
            <person name="Altafi H."/>
            <person name="Araujo R."/>
            <person name="Bowman C.L."/>
            <person name="Brooks S.Y."/>
            <person name="Buehler E."/>
            <person name="Chan A."/>
            <person name="Chao Q."/>
            <person name="Chen H."/>
            <person name="Cheuk R.F."/>
            <person name="Chin C.W."/>
            <person name="Chung M.K."/>
            <person name="Conn L."/>
            <person name="Conway A.B."/>
            <person name="Conway A.R."/>
            <person name="Creasy T.H."/>
            <person name="Dewar K."/>
            <person name="Dunn P."/>
            <person name="Etgu P."/>
            <person name="Feldblyum T.V."/>
            <person name="Feng J.-D."/>
            <person name="Fong B."/>
            <person name="Fujii C.Y."/>
            <person name="Gill J.E."/>
            <person name="Goldsmith A.D."/>
            <person name="Haas B."/>
            <person name="Hansen N.F."/>
            <person name="Hughes B."/>
            <person name="Huizar L."/>
            <person name="Hunter J.L."/>
            <person name="Jenkins J."/>
            <person name="Johnson-Hopson C."/>
            <person name="Khan S."/>
            <person name="Khaykin E."/>
            <person name="Kim C.J."/>
            <person name="Koo H.L."/>
            <person name="Kremenetskaia I."/>
            <person name="Kurtz D.B."/>
            <person name="Kwan A."/>
            <person name="Lam B."/>
            <person name="Langin-Hooper S."/>
            <person name="Lee A."/>
            <person name="Lee J.M."/>
            <person name="Lenz C.A."/>
            <person name="Li J.H."/>
            <person name="Li Y.-P."/>
            <person name="Lin X."/>
            <person name="Liu S.X."/>
            <person name="Liu Z.A."/>
            <person name="Luros J.S."/>
            <person name="Maiti R."/>
            <person name="Marziali A."/>
            <person name="Militscher J."/>
            <person name="Miranda M."/>
            <person name="Nguyen M."/>
            <person name="Nierman W.C."/>
            <person name="Osborne B.I."/>
            <person name="Pai G."/>
            <person name="Peterson J."/>
            <person name="Pham P.K."/>
            <person name="Rizzo M."/>
            <person name="Rooney T."/>
            <person name="Rowley D."/>
            <person name="Sakano H."/>
            <person name="Salzberg S.L."/>
            <person name="Schwartz J.R."/>
            <person name="Shinn P."/>
            <person name="Southwick A.M."/>
            <person name="Sun H."/>
            <person name="Tallon L.J."/>
            <person name="Tambunga G."/>
            <person name="Toriumi M.J."/>
            <person name="Town C.D."/>
            <person name="Utterback T."/>
            <person name="Van Aken S."/>
            <person name="Vaysberg M."/>
            <person name="Vysotskaia V.S."/>
            <person name="Walker M."/>
            <person name="Wu D."/>
            <person name="Yu G."/>
            <person name="Fraser C.M."/>
            <person name="Venter J.C."/>
            <person name="Davis R.W."/>
        </authorList>
    </citation>
    <scope>NUCLEOTIDE SEQUENCE [LARGE SCALE GENOMIC DNA]</scope>
    <source>
        <strain>cv. Columbia</strain>
    </source>
</reference>
<reference key="3">
    <citation type="journal article" date="2017" name="Plant J.">
        <title>Araport11: a complete reannotation of the Arabidopsis thaliana reference genome.</title>
        <authorList>
            <person name="Cheng C.Y."/>
            <person name="Krishnakumar V."/>
            <person name="Chan A.P."/>
            <person name="Thibaud-Nissen F."/>
            <person name="Schobel S."/>
            <person name="Town C.D."/>
        </authorList>
    </citation>
    <scope>GENOME REANNOTATION</scope>
    <source>
        <strain>cv. Columbia</strain>
    </source>
</reference>
<reference key="4">
    <citation type="journal article" date="2003" name="Science">
        <title>Empirical analysis of transcriptional activity in the Arabidopsis genome.</title>
        <authorList>
            <person name="Yamada K."/>
            <person name="Lim J."/>
            <person name="Dale J.M."/>
            <person name="Chen H."/>
            <person name="Shinn P."/>
            <person name="Palm C.J."/>
            <person name="Southwick A.M."/>
            <person name="Wu H.C."/>
            <person name="Kim C.J."/>
            <person name="Nguyen M."/>
            <person name="Pham P.K."/>
            <person name="Cheuk R.F."/>
            <person name="Karlin-Newmann G."/>
            <person name="Liu S.X."/>
            <person name="Lam B."/>
            <person name="Sakano H."/>
            <person name="Wu T."/>
            <person name="Yu G."/>
            <person name="Miranda M."/>
            <person name="Quach H.L."/>
            <person name="Tripp M."/>
            <person name="Chang C.H."/>
            <person name="Lee J.M."/>
            <person name="Toriumi M.J."/>
            <person name="Chan M.M."/>
            <person name="Tang C.C."/>
            <person name="Onodera C.S."/>
            <person name="Deng J.M."/>
            <person name="Akiyama K."/>
            <person name="Ansari Y."/>
            <person name="Arakawa T."/>
            <person name="Banh J."/>
            <person name="Banno F."/>
            <person name="Bowser L."/>
            <person name="Brooks S.Y."/>
            <person name="Carninci P."/>
            <person name="Chao Q."/>
            <person name="Choy N."/>
            <person name="Enju A."/>
            <person name="Goldsmith A.D."/>
            <person name="Gurjal M."/>
            <person name="Hansen N.F."/>
            <person name="Hayashizaki Y."/>
            <person name="Johnson-Hopson C."/>
            <person name="Hsuan V.W."/>
            <person name="Iida K."/>
            <person name="Karnes M."/>
            <person name="Khan S."/>
            <person name="Koesema E."/>
            <person name="Ishida J."/>
            <person name="Jiang P.X."/>
            <person name="Jones T."/>
            <person name="Kawai J."/>
            <person name="Kamiya A."/>
            <person name="Meyers C."/>
            <person name="Nakajima M."/>
            <person name="Narusaka M."/>
            <person name="Seki M."/>
            <person name="Sakurai T."/>
            <person name="Satou M."/>
            <person name="Tamse R."/>
            <person name="Vaysberg M."/>
            <person name="Wallender E.K."/>
            <person name="Wong C."/>
            <person name="Yamamura Y."/>
            <person name="Yuan S."/>
            <person name="Shinozaki K."/>
            <person name="Davis R.W."/>
            <person name="Theologis A."/>
            <person name="Ecker J.R."/>
        </authorList>
    </citation>
    <scope>NUCLEOTIDE SEQUENCE [LARGE SCALE MRNA]</scope>
    <source>
        <strain>cv. Columbia</strain>
    </source>
</reference>
<reference key="5">
    <citation type="submission" date="2002-03" db="EMBL/GenBank/DDBJ databases">
        <title>Full-length cDNA from Arabidopsis thaliana.</title>
        <authorList>
            <person name="Brover V.V."/>
            <person name="Troukhan M.E."/>
            <person name="Alexandrov N.A."/>
            <person name="Lu Y.-P."/>
            <person name="Flavell R.B."/>
            <person name="Feldmann K.A."/>
        </authorList>
    </citation>
    <scope>NUCLEOTIDE SEQUENCE [LARGE SCALE MRNA]</scope>
</reference>
<reference key="6">
    <citation type="journal article" date="2006" name="Amino Acids">
        <title>Histidine biosynthesis in plants.</title>
        <authorList>
            <person name="Stepansky A."/>
            <person name="Leustek T."/>
        </authorList>
    </citation>
    <scope>GENE FAMILY</scope>
    <scope>NOMENCLATURE</scope>
</reference>
<reference key="7">
    <citation type="journal article" date="2007" name="Plant Physiol.">
        <title>Genetic dissection of histidine biosynthesis in Arabidopsis.</title>
        <authorList>
            <person name="Muralla R."/>
            <person name="Sweeney C."/>
            <person name="Stepansky A."/>
            <person name="Leustek T."/>
            <person name="Meinke D."/>
        </authorList>
    </citation>
    <scope>GENE FAMILY</scope>
    <scope>NOMENCLATURE</scope>
</reference>
<accession>O82768</accession>
<keyword id="KW-0028">Amino-acid biosynthesis</keyword>
<keyword id="KW-0067">ATP-binding</keyword>
<keyword id="KW-0150">Chloroplast</keyword>
<keyword id="KW-0368">Histidine biosynthesis</keyword>
<keyword id="KW-0378">Hydrolase</keyword>
<keyword id="KW-0511">Multifunctional enzyme</keyword>
<keyword id="KW-0547">Nucleotide-binding</keyword>
<keyword id="KW-0934">Plastid</keyword>
<keyword id="KW-1185">Reference proteome</keyword>
<keyword id="KW-0809">Transit peptide</keyword>
<evidence type="ECO:0000255" key="1"/>
<evidence type="ECO:0000269" key="2">
    <source>
    </source>
</evidence>
<evidence type="ECO:0000305" key="3"/>
<feature type="transit peptide" description="Chloroplast" evidence="1">
    <location>
        <begin position="1"/>
        <end position="50"/>
    </location>
</feature>
<feature type="chain" id="PRO_0000013444" description="Histidine biosynthesis bifunctional protein hisIE, chloroplastic">
    <location>
        <begin position="51"/>
        <end position="281"/>
    </location>
</feature>
<feature type="region of interest" description="Phosphoribosyl-AMP cyclohydrolase">
    <location>
        <begin position="51"/>
        <end position="178"/>
    </location>
</feature>
<feature type="region of interest" description="Phosphoribosyl-ATP pyrophosphohydrolase">
    <location>
        <begin position="179"/>
        <end position="281"/>
    </location>
</feature>
<proteinExistence type="evidence at protein level"/>